<gene>
    <name evidence="1" type="primary">psbK</name>
</gene>
<organism>
    <name type="scientific">Chaetosphaeridium globosum</name>
    <name type="common">Charophycean green alga</name>
    <name type="synonym">Herposteiron globosum</name>
    <dbReference type="NCBI Taxonomy" id="96477"/>
    <lineage>
        <taxon>Eukaryota</taxon>
        <taxon>Viridiplantae</taxon>
        <taxon>Streptophyta</taxon>
        <taxon>Coleochaetophyceae</taxon>
        <taxon>Coleochaetales</taxon>
        <taxon>Chaetosphaeridiaceae</taxon>
        <taxon>Chaetosphaeridium</taxon>
    </lineage>
</organism>
<comment type="function">
    <text evidence="1">One of the components of the core complex of photosystem II (PSII). PSII is a light-driven water:plastoquinone oxidoreductase that uses light energy to abstract electrons from H(2)O, generating O(2) and a proton gradient subsequently used for ATP formation. It consists of a core antenna complex that captures photons, and an electron transfer chain that converts photonic excitation into a charge separation.</text>
</comment>
<comment type="subunit">
    <text evidence="1">PSII is composed of 1 copy each of membrane proteins PsbA, PsbB, PsbC, PsbD, PsbE, PsbF, PsbH, PsbI, PsbJ, PsbK, PsbL, PsbM, PsbT, PsbX, PsbY, PsbZ, Psb30/Ycf12, at least 3 peripheral proteins of the oxygen-evolving complex and a large number of cofactors. It forms dimeric complexes.</text>
</comment>
<comment type="subcellular location">
    <subcellularLocation>
        <location evidence="1">Plastid</location>
        <location evidence="1">Chloroplast thylakoid membrane</location>
        <topology evidence="1">Single-pass membrane protein</topology>
    </subcellularLocation>
</comment>
<comment type="similarity">
    <text evidence="1">Belongs to the PsbK family.</text>
</comment>
<reference key="1">
    <citation type="journal article" date="2002" name="Proc. Natl. Acad. Sci. U.S.A.">
        <title>The chloroplast and mitochondrial genome sequences of the charophyte Chaetosphaeridium globosum: insights into the timing of the events that restructured organelle DNAs within the green algal lineage that led to land plants.</title>
        <authorList>
            <person name="Turmel M."/>
            <person name="Otis C."/>
            <person name="Lemieux C."/>
        </authorList>
    </citation>
    <scope>NUCLEOTIDE SEQUENCE [LARGE SCALE GENOMIC DNA]</scope>
    <source>
        <strain>M1311</strain>
    </source>
</reference>
<dbReference type="EMBL" id="AF494278">
    <property type="protein sequence ID" value="AAM96547.1"/>
    <property type="molecule type" value="Genomic_DNA"/>
</dbReference>
<dbReference type="RefSeq" id="NP_683786.1">
    <property type="nucleotide sequence ID" value="NC_004115.1"/>
</dbReference>
<dbReference type="SMR" id="Q8MA00"/>
<dbReference type="GeneID" id="860703"/>
<dbReference type="GO" id="GO:0009535">
    <property type="term" value="C:chloroplast thylakoid membrane"/>
    <property type="evidence" value="ECO:0007669"/>
    <property type="project" value="UniProtKB-SubCell"/>
</dbReference>
<dbReference type="GO" id="GO:0009539">
    <property type="term" value="C:photosystem II reaction center"/>
    <property type="evidence" value="ECO:0007669"/>
    <property type="project" value="InterPro"/>
</dbReference>
<dbReference type="GO" id="GO:0015979">
    <property type="term" value="P:photosynthesis"/>
    <property type="evidence" value="ECO:0007669"/>
    <property type="project" value="UniProtKB-UniRule"/>
</dbReference>
<dbReference type="HAMAP" id="MF_00441">
    <property type="entry name" value="PSII_PsbK"/>
    <property type="match status" value="1"/>
</dbReference>
<dbReference type="InterPro" id="IPR003687">
    <property type="entry name" value="PSII_PsbK"/>
</dbReference>
<dbReference type="InterPro" id="IPR037270">
    <property type="entry name" value="PSII_PsbK_sf"/>
</dbReference>
<dbReference type="NCBIfam" id="NF002715">
    <property type="entry name" value="PRK02553.1"/>
    <property type="match status" value="1"/>
</dbReference>
<dbReference type="PANTHER" id="PTHR35325">
    <property type="match status" value="1"/>
</dbReference>
<dbReference type="PANTHER" id="PTHR35325:SF1">
    <property type="entry name" value="PHOTOSYSTEM II REACTION CENTER PROTEIN K"/>
    <property type="match status" value="1"/>
</dbReference>
<dbReference type="Pfam" id="PF02533">
    <property type="entry name" value="PsbK"/>
    <property type="match status" value="1"/>
</dbReference>
<dbReference type="SUPFAM" id="SSF161037">
    <property type="entry name" value="Photosystem II reaction center protein K, PsbK"/>
    <property type="match status" value="1"/>
</dbReference>
<evidence type="ECO:0000255" key="1">
    <source>
        <dbReference type="HAMAP-Rule" id="MF_00441"/>
    </source>
</evidence>
<proteinExistence type="inferred from homology"/>
<feature type="propeptide" id="PRO_0000029443" evidence="1">
    <location>
        <begin position="1"/>
        <end position="21"/>
    </location>
</feature>
<feature type="chain" id="PRO_0000029444" description="Photosystem II reaction center protein K" evidence="1">
    <location>
        <begin position="22"/>
        <end position="58"/>
    </location>
</feature>
<feature type="transmembrane region" description="Helical" evidence="1">
    <location>
        <begin position="29"/>
        <end position="49"/>
    </location>
</feature>
<accession>Q8MA00</accession>
<keyword id="KW-0150">Chloroplast</keyword>
<keyword id="KW-0472">Membrane</keyword>
<keyword id="KW-0602">Photosynthesis</keyword>
<keyword id="KW-0604">Photosystem II</keyword>
<keyword id="KW-0934">Plastid</keyword>
<keyword id="KW-0674">Reaction center</keyword>
<keyword id="KW-0793">Thylakoid</keyword>
<keyword id="KW-0812">Transmembrane</keyword>
<keyword id="KW-1133">Transmembrane helix</keyword>
<geneLocation type="chloroplast"/>
<name>PSBK_CHAGL</name>
<sequence>MLNMISTFFDSSSNFSEAFLAKLPEAYAIFDPIVDVMPIIPVFFLLLAFVWQAAVSFR</sequence>
<protein>
    <recommendedName>
        <fullName evidence="1">Photosystem II reaction center protein K</fullName>
        <shortName evidence="1">PSII-K</shortName>
    </recommendedName>
</protein>